<reference key="1">
    <citation type="submission" date="2006-01" db="EMBL/GenBank/DDBJ databases">
        <title>WNT7A and limb development.</title>
        <authorList>
            <person name="Stern R."/>
            <person name="Cox J."/>
            <person name="Nicholas A."/>
            <person name="Al-Gazali L."/>
            <person name="Woods G."/>
        </authorList>
    </citation>
    <scope>NUCLEOTIDE SEQUENCE [GENOMIC DNA]</scope>
</reference>
<proteinExistence type="inferred from homology"/>
<dbReference type="EMBL" id="DQ367068">
    <property type="protein sequence ID" value="ABE73770.1"/>
    <property type="molecule type" value="Genomic_DNA"/>
</dbReference>
<dbReference type="SMR" id="Q1KYL3"/>
<dbReference type="GlyCosmos" id="Q1KYL3">
    <property type="glycosylation" value="3 sites, No reported glycans"/>
</dbReference>
<dbReference type="GO" id="GO:0005615">
    <property type="term" value="C:extracellular space"/>
    <property type="evidence" value="ECO:0007669"/>
    <property type="project" value="TreeGrafter"/>
</dbReference>
<dbReference type="GO" id="GO:0005125">
    <property type="term" value="F:cytokine activity"/>
    <property type="evidence" value="ECO:0007669"/>
    <property type="project" value="TreeGrafter"/>
</dbReference>
<dbReference type="GO" id="GO:0005109">
    <property type="term" value="F:frizzled binding"/>
    <property type="evidence" value="ECO:0007669"/>
    <property type="project" value="TreeGrafter"/>
</dbReference>
<dbReference type="GO" id="GO:0048513">
    <property type="term" value="P:animal organ development"/>
    <property type="evidence" value="ECO:0007669"/>
    <property type="project" value="UniProtKB-ARBA"/>
</dbReference>
<dbReference type="GO" id="GO:0060070">
    <property type="term" value="P:canonical Wnt signaling pathway"/>
    <property type="evidence" value="ECO:0007669"/>
    <property type="project" value="TreeGrafter"/>
</dbReference>
<dbReference type="GO" id="GO:0045165">
    <property type="term" value="P:cell fate commitment"/>
    <property type="evidence" value="ECO:0007669"/>
    <property type="project" value="TreeGrafter"/>
</dbReference>
<dbReference type="GO" id="GO:0030182">
    <property type="term" value="P:neuron differentiation"/>
    <property type="evidence" value="ECO:0007669"/>
    <property type="project" value="TreeGrafter"/>
</dbReference>
<dbReference type="GO" id="GO:0046330">
    <property type="term" value="P:positive regulation of JNK cascade"/>
    <property type="evidence" value="ECO:0007669"/>
    <property type="project" value="TreeGrafter"/>
</dbReference>
<dbReference type="GO" id="GO:0009888">
    <property type="term" value="P:tissue development"/>
    <property type="evidence" value="ECO:0007669"/>
    <property type="project" value="UniProtKB-ARBA"/>
</dbReference>
<dbReference type="CDD" id="cd19349">
    <property type="entry name" value="Wnt_Wnt7a"/>
    <property type="match status" value="1"/>
</dbReference>
<dbReference type="FunFam" id="3.30.2460.20:FF:000001">
    <property type="entry name" value="Wnt homolog"/>
    <property type="match status" value="1"/>
</dbReference>
<dbReference type="Gene3D" id="3.30.2460.20">
    <property type="match status" value="1"/>
</dbReference>
<dbReference type="InterPro" id="IPR005817">
    <property type="entry name" value="Wnt"/>
</dbReference>
<dbReference type="InterPro" id="IPR013300">
    <property type="entry name" value="Wnt7"/>
</dbReference>
<dbReference type="InterPro" id="IPR043158">
    <property type="entry name" value="Wnt_C"/>
</dbReference>
<dbReference type="InterPro" id="IPR018161">
    <property type="entry name" value="Wnt_CS"/>
</dbReference>
<dbReference type="PANTHER" id="PTHR12027:SF78">
    <property type="entry name" value="PROTEIN WNT-7A"/>
    <property type="match status" value="1"/>
</dbReference>
<dbReference type="PANTHER" id="PTHR12027">
    <property type="entry name" value="WNT RELATED"/>
    <property type="match status" value="1"/>
</dbReference>
<dbReference type="Pfam" id="PF00110">
    <property type="entry name" value="wnt"/>
    <property type="match status" value="1"/>
</dbReference>
<dbReference type="PRINTS" id="PR01891">
    <property type="entry name" value="WNT7PROTEIN"/>
</dbReference>
<dbReference type="PRINTS" id="PR01349">
    <property type="entry name" value="WNTPROTEIN"/>
</dbReference>
<dbReference type="SMART" id="SM00097">
    <property type="entry name" value="WNT1"/>
    <property type="match status" value="1"/>
</dbReference>
<dbReference type="PROSITE" id="PS00246">
    <property type="entry name" value="WNT1"/>
    <property type="match status" value="1"/>
</dbReference>
<organism>
    <name type="scientific">Chlorocebus aethiops</name>
    <name type="common">Green monkey</name>
    <name type="synonym">Cercopithecus aethiops</name>
    <dbReference type="NCBI Taxonomy" id="9534"/>
    <lineage>
        <taxon>Eukaryota</taxon>
        <taxon>Metazoa</taxon>
        <taxon>Chordata</taxon>
        <taxon>Craniata</taxon>
        <taxon>Vertebrata</taxon>
        <taxon>Euteleostomi</taxon>
        <taxon>Mammalia</taxon>
        <taxon>Eutheria</taxon>
        <taxon>Euarchontoglires</taxon>
        <taxon>Primates</taxon>
        <taxon>Haplorrhini</taxon>
        <taxon>Catarrhini</taxon>
        <taxon>Cercopithecidae</taxon>
        <taxon>Cercopithecinae</taxon>
        <taxon>Chlorocebus</taxon>
    </lineage>
</organism>
<keyword id="KW-0217">Developmental protein</keyword>
<keyword id="KW-1015">Disulfide bond</keyword>
<keyword id="KW-0272">Extracellular matrix</keyword>
<keyword id="KW-0325">Glycoprotein</keyword>
<keyword id="KW-0449">Lipoprotein</keyword>
<keyword id="KW-0964">Secreted</keyword>
<keyword id="KW-0732">Signal</keyword>
<keyword id="KW-0879">Wnt signaling pathway</keyword>
<accession>Q1KYL3</accession>
<evidence type="ECO:0000250" key="1">
    <source>
        <dbReference type="UniProtKB" id="O00755"/>
    </source>
</evidence>
<evidence type="ECO:0000250" key="2">
    <source>
        <dbReference type="UniProtKB" id="P24383"/>
    </source>
</evidence>
<evidence type="ECO:0000250" key="3">
    <source>
        <dbReference type="UniProtKB" id="P27467"/>
    </source>
</evidence>
<evidence type="ECO:0000250" key="4">
    <source>
        <dbReference type="UniProtKB" id="P28026"/>
    </source>
</evidence>
<evidence type="ECO:0000250" key="5">
    <source>
        <dbReference type="UniProtKB" id="P56704"/>
    </source>
</evidence>
<evidence type="ECO:0000255" key="6"/>
<evidence type="ECO:0000305" key="7"/>
<gene>
    <name type="primary">WNT7A</name>
</gene>
<protein>
    <recommendedName>
        <fullName>Protein Wnt-7a</fullName>
    </recommendedName>
</protein>
<feature type="signal peptide" evidence="6">
    <location>
        <begin position="1"/>
        <end position="31"/>
    </location>
</feature>
<feature type="chain" id="PRO_0000245334" description="Protein Wnt-7a">
    <location>
        <begin position="32"/>
        <end position="349"/>
    </location>
</feature>
<feature type="region of interest" description="Disordered linker" evidence="1">
    <location>
        <begin position="238"/>
        <end position="266"/>
    </location>
</feature>
<feature type="lipid moiety-binding region" description="O-palmitoleoyl serine; by PORCN" evidence="5">
    <location>
        <position position="206"/>
    </location>
</feature>
<feature type="glycosylation site" description="N-linked (GlcNAc...) asparagine" evidence="6">
    <location>
        <position position="83"/>
    </location>
</feature>
<feature type="glycosylation site" description="N-linked (GlcNAc...) asparagine" evidence="6">
    <location>
        <position position="127"/>
    </location>
</feature>
<feature type="glycosylation site" description="N-linked (GlcNAc...) asparagine" evidence="6">
    <location>
        <position position="295"/>
    </location>
</feature>
<feature type="disulfide bond" evidence="4">
    <location>
        <begin position="73"/>
        <end position="84"/>
    </location>
</feature>
<feature type="disulfide bond" evidence="4">
    <location>
        <begin position="123"/>
        <end position="131"/>
    </location>
</feature>
<feature type="disulfide bond" evidence="4">
    <location>
        <begin position="133"/>
        <end position="152"/>
    </location>
</feature>
<feature type="disulfide bond" evidence="4">
    <location>
        <begin position="200"/>
        <end position="214"/>
    </location>
</feature>
<feature type="disulfide bond" evidence="4">
    <location>
        <begin position="202"/>
        <end position="209"/>
    </location>
</feature>
<feature type="disulfide bond" evidence="4">
    <location>
        <begin position="278"/>
        <end position="309"/>
    </location>
</feature>
<feature type="disulfide bond" evidence="4">
    <location>
        <begin position="294"/>
        <end position="304"/>
    </location>
</feature>
<feature type="disulfide bond" evidence="4">
    <location>
        <begin position="308"/>
        <end position="348"/>
    </location>
</feature>
<feature type="disulfide bond" evidence="4">
    <location>
        <begin position="324"/>
        <end position="339"/>
    </location>
</feature>
<feature type="disulfide bond" evidence="4">
    <location>
        <begin position="326"/>
        <end position="336"/>
    </location>
</feature>
<feature type="disulfide bond" evidence="4">
    <location>
        <begin position="331"/>
        <end position="332"/>
    </location>
</feature>
<comment type="function">
    <text evidence="1 2">Ligand for members of the frizzled family of seven transmembrane receptors that functions in the canonical Wnt/beta-catenin signaling pathway (By similarity). Plays an important role in embryonic development, including dorsal versus ventral patterning during limb development, skeleton development and urogenital tract development. Required for central nervous system (CNS) angiogenesis and blood-brain barrier regulation (By similarity). Required for normal, sexually dimorphic development of the Mullerian ducts, and for normal fertility in both sexes. Required for normal neural stem cell proliferation in the hippocampus dentate gyrus. Required for normal progress through the cell cycle in neural progenitor cells, for self-renewal of neural stem cells, and for normal neuronal differentiation and maturation. Promotes formation of synapses via its interaction with FZD5 (By similarity).</text>
</comment>
<comment type="subunit">
    <text evidence="1 2">Forms a soluble 1:1 complex with AFM; this prevents oligomerization and is required for prolonged biological activity. The complex with AFM may represent the physiological form in body fluids (By similarity). Interacts with PORCN (By similarity). Interacts (via intrinsically disordered linker region) with RECK; interaction with RECK confers ligand selectivity for Wnt7 in brain endothelial cells and allows these cells to selectively respond to Wnt7 (By similarity). Interacts with FZD5 (By similarity).</text>
</comment>
<comment type="subcellular location">
    <subcellularLocation>
        <location evidence="2">Secreted</location>
        <location evidence="2">Extracellular space</location>
        <location evidence="2">Extracellular matrix</location>
    </subcellularLocation>
    <subcellularLocation>
        <location evidence="2">Secreted</location>
    </subcellularLocation>
</comment>
<comment type="domain">
    <text evidence="1">The intrinsically disordered linker region is required for recognition by RECK in brain endothelial cells.</text>
</comment>
<comment type="PTM">
    <text evidence="3 5">Palmitoleoylation is required for efficient binding to frizzled receptors. Depalmitoleoylation leads to Wnt signaling pathway inhibition.</text>
</comment>
<comment type="similarity">
    <text evidence="7">Belongs to the Wnt family.</text>
</comment>
<name>WNT7A_CHLAE</name>
<sequence>MNRKARRCLGHLFLSLGMVYLRIGGFSTVVALGASIICNKIPGLAPRQRAICQSRPDAIIVIGEGSQMGLDECQFQFRNGRWNCSALGERTVFGKELKVGSREAAFTYAIIAAGVAHAITAACTQGNLSDCGCDKEKQGQYHRDEGWKWGGCSADIRYGIGFAKVFVDAREIKQNARTLMNLHNNEAGRKILEENMKLECKCHGVSGSCTTKTCWTTLPQFRELGYVLKDKYNEAVHVEPVRASRNKRPTFLKIKKPLSYRKPMDTDLVYIEKSPNYCEEDPVTGSVGTQGRACNKTAPQASGCDLMCCGRGYNTHQYARVWQCNCKFHWCCYVKCNTCSERTEMYTCK</sequence>